<accession>Q06458</accession>
<evidence type="ECO:0000250" key="1"/>
<evidence type="ECO:0000250" key="2">
    <source>
        <dbReference type="UniProtKB" id="P05340"/>
    </source>
</evidence>
<evidence type="ECO:0000255" key="3"/>
<evidence type="ECO:0000305" key="4"/>
<reference key="1">
    <citation type="journal article" date="1993" name="J. Bacteriol.">
        <title>Structures of genes nasA and nasB, encoding assimilatory nitrate and nitrite reductases in Klebsiella pneumoniae M5al.</title>
        <authorList>
            <person name="Lin J.T."/>
            <person name="Goldman B.S."/>
            <person name="Stewart V."/>
        </authorList>
    </citation>
    <scope>NUCLEOTIDE SEQUENCE [GENOMIC DNA]</scope>
    <source>
        <strain>M5a1</strain>
    </source>
</reference>
<gene>
    <name type="primary">nasB</name>
</gene>
<feature type="chain" id="PRO_0000199963" description="Nitrite reductase [NAD(P)H] large subunit">
    <location>
        <begin position="1"/>
        <end position="957"/>
    </location>
</feature>
<feature type="binding site" evidence="3">
    <location>
        <begin position="44"/>
        <end position="79"/>
    </location>
    <ligand>
        <name>FAD</name>
        <dbReference type="ChEBI" id="CHEBI:57692"/>
    </ligand>
</feature>
<feature type="binding site" evidence="3">
    <location>
        <begin position="193"/>
        <end position="225"/>
    </location>
    <ligand>
        <name>NAD(+)</name>
        <dbReference type="ChEBI" id="CHEBI:57540"/>
    </ligand>
</feature>
<feature type="binding site" evidence="2">
    <location>
        <position position="423"/>
    </location>
    <ligand>
        <name>[2Fe-2S] cluster</name>
        <dbReference type="ChEBI" id="CHEBI:190135"/>
    </ligand>
</feature>
<feature type="binding site" evidence="2">
    <location>
        <position position="425"/>
    </location>
    <ligand>
        <name>[2Fe-2S] cluster</name>
        <dbReference type="ChEBI" id="CHEBI:190135"/>
    </ligand>
</feature>
<feature type="binding site" evidence="2">
    <location>
        <position position="457"/>
    </location>
    <ligand>
        <name>[2Fe-2S] cluster</name>
        <dbReference type="ChEBI" id="CHEBI:190135"/>
    </ligand>
</feature>
<feature type="binding site" evidence="2">
    <location>
        <position position="460"/>
    </location>
    <ligand>
        <name>[2Fe-2S] cluster</name>
        <dbReference type="ChEBI" id="CHEBI:190135"/>
    </ligand>
</feature>
<feature type="binding site" evidence="1">
    <location>
        <position position="639"/>
    </location>
    <ligand>
        <name>[4Fe-4S] cluster</name>
        <dbReference type="ChEBI" id="CHEBI:49883"/>
    </ligand>
</feature>
<feature type="binding site" evidence="1">
    <location>
        <position position="645"/>
    </location>
    <ligand>
        <name>[4Fe-4S] cluster</name>
        <dbReference type="ChEBI" id="CHEBI:49883"/>
    </ligand>
</feature>
<feature type="binding site" evidence="1">
    <location>
        <position position="679"/>
    </location>
    <ligand>
        <name>[4Fe-4S] cluster</name>
        <dbReference type="ChEBI" id="CHEBI:49883"/>
    </ligand>
</feature>
<feature type="binding site" evidence="1">
    <location>
        <position position="683"/>
    </location>
    <ligand>
        <name>[4Fe-4S] cluster</name>
        <dbReference type="ChEBI" id="CHEBI:49883"/>
    </ligand>
</feature>
<feature type="binding site" description="axial binding residue" evidence="1">
    <location>
        <position position="683"/>
    </location>
    <ligand>
        <name>siroheme</name>
        <dbReference type="ChEBI" id="CHEBI:60052"/>
    </ligand>
    <ligandPart>
        <name>Fe</name>
        <dbReference type="ChEBI" id="CHEBI:18248"/>
    </ligandPart>
</feature>
<keyword id="KW-0001">2Fe-2S</keyword>
<keyword id="KW-0004">4Fe-4S</keyword>
<keyword id="KW-0274">FAD</keyword>
<keyword id="KW-0285">Flavoprotein</keyword>
<keyword id="KW-0349">Heme</keyword>
<keyword id="KW-0408">Iron</keyword>
<keyword id="KW-0411">Iron-sulfur</keyword>
<keyword id="KW-0479">Metal-binding</keyword>
<keyword id="KW-0521">NADP</keyword>
<keyword id="KW-0534">Nitrate assimilation</keyword>
<keyword id="KW-0560">Oxidoreductase</keyword>
<proteinExistence type="inferred from homology"/>
<comment type="catalytic activity">
    <reaction>
        <text>NH4(+) + 3 NADP(+) + 2 H2O = nitrite + 3 NADPH + 5 H(+)</text>
        <dbReference type="Rhea" id="RHEA:24632"/>
        <dbReference type="ChEBI" id="CHEBI:15377"/>
        <dbReference type="ChEBI" id="CHEBI:15378"/>
        <dbReference type="ChEBI" id="CHEBI:16301"/>
        <dbReference type="ChEBI" id="CHEBI:28938"/>
        <dbReference type="ChEBI" id="CHEBI:57783"/>
        <dbReference type="ChEBI" id="CHEBI:58349"/>
        <dbReference type="EC" id="1.7.1.4"/>
    </reaction>
</comment>
<comment type="catalytic activity">
    <reaction>
        <text>NH4(+) + 3 NAD(+) + 2 H2O = nitrite + 3 NADH + 5 H(+)</text>
        <dbReference type="Rhea" id="RHEA:24628"/>
        <dbReference type="ChEBI" id="CHEBI:15377"/>
        <dbReference type="ChEBI" id="CHEBI:15378"/>
        <dbReference type="ChEBI" id="CHEBI:16301"/>
        <dbReference type="ChEBI" id="CHEBI:28938"/>
        <dbReference type="ChEBI" id="CHEBI:57540"/>
        <dbReference type="ChEBI" id="CHEBI:57945"/>
        <dbReference type="EC" id="1.7.1.4"/>
    </reaction>
</comment>
<comment type="cofactor">
    <cofactor>
        <name>siroheme</name>
        <dbReference type="ChEBI" id="CHEBI:60052"/>
    </cofactor>
    <text>Binds 1 siroheme per subunit.</text>
</comment>
<comment type="cofactor">
    <cofactor evidence="2">
        <name>[2Fe-2S] cluster</name>
        <dbReference type="ChEBI" id="CHEBI:190135"/>
    </cofactor>
    <text evidence="2">Binds 1 [2Fe-2S] cluster per subunit.</text>
</comment>
<comment type="cofactor">
    <cofactor evidence="1">
        <name>[4Fe-4S] cluster</name>
        <dbReference type="ChEBI" id="CHEBI:49883"/>
    </cofactor>
    <text evidence="1">Binds 1 [4Fe-4S] cluster per subunit.</text>
</comment>
<comment type="cofactor">
    <cofactor>
        <name>FAD</name>
        <dbReference type="ChEBI" id="CHEBI:57692"/>
    </cofactor>
</comment>
<comment type="pathway">
    <text>Nitrogen metabolism; nitrate reduction (assimilation).</text>
</comment>
<comment type="subunit">
    <text evidence="1">Homodimer which associates with NirD.</text>
</comment>
<comment type="similarity">
    <text evidence="4">Belongs to the nitrite and sulfite reductase 4Fe-4S domain family.</text>
</comment>
<protein>
    <recommendedName>
        <fullName>Nitrite reductase [NAD(P)H] large subunit</fullName>
        <ecNumber>1.7.1.4</ecNumber>
    </recommendedName>
</protein>
<sequence length="957" mass="104227">MTKPVLVLVGHGMVGHHFLEQCVSRDLHQQYRIVVFCEERYAAYDRVHLTEYFAGRSAESLSLVEGDFFTQHGIELRLSESVASIDREARVVRDAFGHETHWDKLVLATGSYPFVPPVPGHNLEGCFVYRTLDDLDQIAARAATARRGVVIGGGLLGLEAANALKQLGLETHVVEFAPNLMAVQLDNGGAAMLREKISELGVGVHTSKATTEIVRNEQGLQLNFRDGSSLATDMLVFSAGIRPQDALARSGGLSVGERGGICIDNQCRTSDPDVLAIGECALWENKIYGLVAPGYQMAARRAATLAGEAGSFSGADMSTKLKLLGVDVASFGDAQGRTPGCQSYQWTHGPQQVYKKIVVSADGKNLLGGVLVGDAGDYATLLQMMLNGMALPKHPESLILPALEGSRPKALGVAALPDGAQICSCHNVSKGDICQAVSGGAGDMAAIKSRTKAATGCGGCSALVKQVMEYQLAEQGVEVKKDICEHFPWSRQEIYHLVRVNHIRTFEQLIARYGQGHGCEVCKPLVASVLASCWNEYLLKPAHLPLQDTNDRYFANIQKDGTYSVVPRMAAGEVTPDGLIAIGQIAKRYQLYSKVTGGQRIDLFGARLEQLPAIWRELAEAGFETGHAYGKSLRTVKSCVGSTWCRYGVQDSTGLAVTLEHRYKGLRAPHKIKMAVSGCTRECAEAQGKDIGVIATEKGWNLYVCGNGGMKPRHADLFASDLDEATLIRSIDRLLMFYIRTADRLQRTSTWMDNLEGGVDYLREMILEDSLGIGEELEQEMARVVESYQCEWQTTLNDPQRLALFRSYVNSDEPDETVQRQTLRGQPQLAPFAAQGEPALPSRPWQAICDLDAIPQQAGIGARLGERQIALFRFGDQVYALDNLEPGSEANVLSRGLLGDAGGEPIVISPLYKQRIRLRDGRQCDGGEQAVRAWPVKVENGKVWVGNQQLLARAEAS</sequence>
<dbReference type="EC" id="1.7.1.4"/>
<dbReference type="EMBL" id="L06800">
    <property type="protein sequence ID" value="AAA25099.1"/>
    <property type="molecule type" value="Genomic_DNA"/>
</dbReference>
<dbReference type="SMR" id="Q06458"/>
<dbReference type="STRING" id="571.AB185_18735"/>
<dbReference type="eggNOG" id="COG1251">
    <property type="taxonomic scope" value="Bacteria"/>
</dbReference>
<dbReference type="eggNOG" id="COG2146">
    <property type="taxonomic scope" value="Bacteria"/>
</dbReference>
<dbReference type="UniPathway" id="UPA00653"/>
<dbReference type="GO" id="GO:0051537">
    <property type="term" value="F:2 iron, 2 sulfur cluster binding"/>
    <property type="evidence" value="ECO:0007669"/>
    <property type="project" value="UniProtKB-KW"/>
</dbReference>
<dbReference type="GO" id="GO:0051539">
    <property type="term" value="F:4 iron, 4 sulfur cluster binding"/>
    <property type="evidence" value="ECO:0007669"/>
    <property type="project" value="UniProtKB-KW"/>
</dbReference>
<dbReference type="GO" id="GO:0050660">
    <property type="term" value="F:flavin adenine dinucleotide binding"/>
    <property type="evidence" value="ECO:0007669"/>
    <property type="project" value="InterPro"/>
</dbReference>
<dbReference type="GO" id="GO:0020037">
    <property type="term" value="F:heme binding"/>
    <property type="evidence" value="ECO:0007669"/>
    <property type="project" value="InterPro"/>
</dbReference>
<dbReference type="GO" id="GO:0046872">
    <property type="term" value="F:metal ion binding"/>
    <property type="evidence" value="ECO:0007669"/>
    <property type="project" value="UniProtKB-KW"/>
</dbReference>
<dbReference type="GO" id="GO:0050661">
    <property type="term" value="F:NADP binding"/>
    <property type="evidence" value="ECO:0007669"/>
    <property type="project" value="InterPro"/>
</dbReference>
<dbReference type="GO" id="GO:0106316">
    <property type="term" value="F:nitrite reductase NADH activity"/>
    <property type="evidence" value="ECO:0007669"/>
    <property type="project" value="RHEA"/>
</dbReference>
<dbReference type="GO" id="GO:0042128">
    <property type="term" value="P:nitrate assimilation"/>
    <property type="evidence" value="ECO:0007669"/>
    <property type="project" value="UniProtKB-UniPathway"/>
</dbReference>
<dbReference type="CDD" id="cd19944">
    <property type="entry name" value="NirB_Fer2_BFD-like_2"/>
    <property type="match status" value="1"/>
</dbReference>
<dbReference type="CDD" id="cd03529">
    <property type="entry name" value="Rieske_NirD"/>
    <property type="match status" value="1"/>
</dbReference>
<dbReference type="FunFam" id="3.30.413.10:FF:000007">
    <property type="entry name" value="Nitrite reductase [NAD(P)H] large subunit"/>
    <property type="match status" value="1"/>
</dbReference>
<dbReference type="FunFam" id="3.50.50.60:FF:000033">
    <property type="entry name" value="Nitrite reductase [NAD(P)H], large subunit"/>
    <property type="match status" value="1"/>
</dbReference>
<dbReference type="FunFam" id="1.10.10.1100:FF:000002">
    <property type="entry name" value="Nitrite reductase large subunit"/>
    <property type="match status" value="1"/>
</dbReference>
<dbReference type="Gene3D" id="3.30.390.30">
    <property type="match status" value="1"/>
</dbReference>
<dbReference type="Gene3D" id="1.10.10.1100">
    <property type="entry name" value="BFD-like [2Fe-2S]-binding domain"/>
    <property type="match status" value="1"/>
</dbReference>
<dbReference type="Gene3D" id="3.50.50.60">
    <property type="entry name" value="FAD/NAD(P)-binding domain"/>
    <property type="match status" value="2"/>
</dbReference>
<dbReference type="Gene3D" id="2.102.10.10">
    <property type="entry name" value="Rieske [2Fe-2S] iron-sulphur domain"/>
    <property type="match status" value="1"/>
</dbReference>
<dbReference type="Gene3D" id="3.30.413.10">
    <property type="entry name" value="Sulfite Reductase Hemoprotein, domain 1"/>
    <property type="match status" value="1"/>
</dbReference>
<dbReference type="InterPro" id="IPR007419">
    <property type="entry name" value="BFD-like_2Fe2S-bd_dom"/>
</dbReference>
<dbReference type="InterPro" id="IPR041854">
    <property type="entry name" value="BFD-like_2Fe2S-bd_dom_sf"/>
</dbReference>
<dbReference type="InterPro" id="IPR036188">
    <property type="entry name" value="FAD/NAD-bd_sf"/>
</dbReference>
<dbReference type="InterPro" id="IPR023753">
    <property type="entry name" value="FAD/NAD-binding_dom"/>
</dbReference>
<dbReference type="InterPro" id="IPR016156">
    <property type="entry name" value="FAD/NAD-linked_Rdtase_dimer_sf"/>
</dbReference>
<dbReference type="InterPro" id="IPR052034">
    <property type="entry name" value="NasD-like"/>
</dbReference>
<dbReference type="InterPro" id="IPR005117">
    <property type="entry name" value="NiRdtase/SiRdtase_haem-b_fer"/>
</dbReference>
<dbReference type="InterPro" id="IPR036136">
    <property type="entry name" value="Nit/Sulf_reduc_fer-like_dom_sf"/>
</dbReference>
<dbReference type="InterPro" id="IPR012744">
    <property type="entry name" value="Nitri_red_NirB"/>
</dbReference>
<dbReference type="InterPro" id="IPR006067">
    <property type="entry name" value="NO2/SO3_Rdtase_4Fe4S_dom"/>
</dbReference>
<dbReference type="InterPro" id="IPR045854">
    <property type="entry name" value="NO2/SO3_Rdtase_4Fe4S_sf"/>
</dbReference>
<dbReference type="InterPro" id="IPR006066">
    <property type="entry name" value="NO2/SO3_Rdtase_FeS/sirohaem_BS"/>
</dbReference>
<dbReference type="InterPro" id="IPR012748">
    <property type="entry name" value="Rieske-like_NirD"/>
</dbReference>
<dbReference type="InterPro" id="IPR017941">
    <property type="entry name" value="Rieske_2Fe-2S"/>
</dbReference>
<dbReference type="InterPro" id="IPR036922">
    <property type="entry name" value="Rieske_2Fe-2S_sf"/>
</dbReference>
<dbReference type="InterPro" id="IPR041575">
    <property type="entry name" value="Rubredoxin_C"/>
</dbReference>
<dbReference type="NCBIfam" id="TIGR02378">
    <property type="entry name" value="nirD_assim_sml"/>
    <property type="match status" value="1"/>
</dbReference>
<dbReference type="NCBIfam" id="TIGR02374">
    <property type="entry name" value="nitri_red_nirB"/>
    <property type="match status" value="1"/>
</dbReference>
<dbReference type="NCBIfam" id="NF011565">
    <property type="entry name" value="PRK14989.1"/>
    <property type="match status" value="1"/>
</dbReference>
<dbReference type="PANTHER" id="PTHR43809">
    <property type="entry name" value="NITRITE REDUCTASE (NADH) LARGE SUBUNIT"/>
    <property type="match status" value="1"/>
</dbReference>
<dbReference type="PANTHER" id="PTHR43809:SF1">
    <property type="entry name" value="NITRITE REDUCTASE (NADH) LARGE SUBUNIT"/>
    <property type="match status" value="1"/>
</dbReference>
<dbReference type="Pfam" id="PF04324">
    <property type="entry name" value="Fer2_BFD"/>
    <property type="match status" value="1"/>
</dbReference>
<dbReference type="Pfam" id="PF01077">
    <property type="entry name" value="NIR_SIR"/>
    <property type="match status" value="1"/>
</dbReference>
<dbReference type="Pfam" id="PF03460">
    <property type="entry name" value="NIR_SIR_ferr"/>
    <property type="match status" value="1"/>
</dbReference>
<dbReference type="Pfam" id="PF07992">
    <property type="entry name" value="Pyr_redox_2"/>
    <property type="match status" value="1"/>
</dbReference>
<dbReference type="Pfam" id="PF13806">
    <property type="entry name" value="Rieske_2"/>
    <property type="match status" value="1"/>
</dbReference>
<dbReference type="Pfam" id="PF18267">
    <property type="entry name" value="Rubredoxin_C"/>
    <property type="match status" value="1"/>
</dbReference>
<dbReference type="PRINTS" id="PR00368">
    <property type="entry name" value="FADPNR"/>
</dbReference>
<dbReference type="PRINTS" id="PR00411">
    <property type="entry name" value="PNDRDTASEI"/>
</dbReference>
<dbReference type="PRINTS" id="PR00397">
    <property type="entry name" value="SIROHAEM"/>
</dbReference>
<dbReference type="SUPFAM" id="SSF51905">
    <property type="entry name" value="FAD/NAD(P)-binding domain"/>
    <property type="match status" value="2"/>
</dbReference>
<dbReference type="SUPFAM" id="SSF50022">
    <property type="entry name" value="ISP domain"/>
    <property type="match status" value="1"/>
</dbReference>
<dbReference type="SUPFAM" id="SSF56014">
    <property type="entry name" value="Nitrite and sulphite reductase 4Fe-4S domain-like"/>
    <property type="match status" value="1"/>
</dbReference>
<dbReference type="SUPFAM" id="SSF55124">
    <property type="entry name" value="Nitrite/Sulfite reductase N-terminal domain-like"/>
    <property type="match status" value="1"/>
</dbReference>
<dbReference type="PROSITE" id="PS00365">
    <property type="entry name" value="NIR_SIR"/>
    <property type="match status" value="1"/>
</dbReference>
<dbReference type="PROSITE" id="PS51300">
    <property type="entry name" value="NIRD"/>
    <property type="match status" value="1"/>
</dbReference>
<organism>
    <name type="scientific">Klebsiella oxytoca</name>
    <dbReference type="NCBI Taxonomy" id="571"/>
    <lineage>
        <taxon>Bacteria</taxon>
        <taxon>Pseudomonadati</taxon>
        <taxon>Pseudomonadota</taxon>
        <taxon>Gammaproteobacteria</taxon>
        <taxon>Enterobacterales</taxon>
        <taxon>Enterobacteriaceae</taxon>
        <taxon>Klebsiella/Raoultella group</taxon>
        <taxon>Klebsiella</taxon>
    </lineage>
</organism>
<name>NIRB_KLEOX</name>